<sequence>MESIGIVAPQTMHFAEPLRLQSGSVLGNYQLVVETYGELNAARSNAVLVCHALNASHHVAGVYADDPRSTGWWDNMVGPGKPLDTNRFFVIGVNNLGSCFGSTGPMSIDPSTGKPYGAKFPVVTVEDWVHAQARVADAFGIERFAAVMGGSLGGMQALAWSLMYPERVAHCIDIASTPKLSAQNIAFNEVARSAILSDPDFHGGDYYAHGVKPKRGLRVARMIGHITYLSDDDMAEKFGRALRRADGALDAYNFSFDVEFEVESYLRYQGDKFADYFDANTYLLITRALDYFDPAKAFDGNLTAALAHTQAKYLIASFSTDWRFAPARSREIVKALLDNKRTVSYAEIDAPHGHDAFLLDDARYHNLLRAYYERIANEVGA</sequence>
<gene>
    <name evidence="1" type="primary">metXS</name>
    <name type="ordered locus">Bcen_2485</name>
</gene>
<dbReference type="EC" id="2.3.1.46" evidence="1"/>
<dbReference type="EMBL" id="CP000378">
    <property type="protein sequence ID" value="ABF77384.1"/>
    <property type="molecule type" value="Genomic_DNA"/>
</dbReference>
<dbReference type="SMR" id="Q1BSM1"/>
<dbReference type="ESTHER" id="burca-metx">
    <property type="family name" value="Homoserine_transacetylase"/>
</dbReference>
<dbReference type="HOGENOM" id="CLU_028760_1_2_4"/>
<dbReference type="UniPathway" id="UPA00051">
    <property type="reaction ID" value="UER00075"/>
</dbReference>
<dbReference type="GO" id="GO:0005737">
    <property type="term" value="C:cytoplasm"/>
    <property type="evidence" value="ECO:0007669"/>
    <property type="project" value="UniProtKB-SubCell"/>
</dbReference>
<dbReference type="GO" id="GO:0004414">
    <property type="term" value="F:homoserine O-acetyltransferase activity"/>
    <property type="evidence" value="ECO:0007669"/>
    <property type="project" value="TreeGrafter"/>
</dbReference>
<dbReference type="GO" id="GO:0008899">
    <property type="term" value="F:homoserine O-succinyltransferase activity"/>
    <property type="evidence" value="ECO:0007669"/>
    <property type="project" value="UniProtKB-UniRule"/>
</dbReference>
<dbReference type="GO" id="GO:0009092">
    <property type="term" value="P:homoserine metabolic process"/>
    <property type="evidence" value="ECO:0007669"/>
    <property type="project" value="TreeGrafter"/>
</dbReference>
<dbReference type="GO" id="GO:0009086">
    <property type="term" value="P:methionine biosynthetic process"/>
    <property type="evidence" value="ECO:0007669"/>
    <property type="project" value="UniProtKB-UniRule"/>
</dbReference>
<dbReference type="FunFam" id="1.10.1740.110:FF:000001">
    <property type="entry name" value="Homoserine O-acetyltransferase"/>
    <property type="match status" value="1"/>
</dbReference>
<dbReference type="Gene3D" id="1.10.1740.110">
    <property type="match status" value="1"/>
</dbReference>
<dbReference type="Gene3D" id="3.40.50.1820">
    <property type="entry name" value="alpha/beta hydrolase"/>
    <property type="match status" value="1"/>
</dbReference>
<dbReference type="HAMAP" id="MF_00296">
    <property type="entry name" value="MetX_acyltransf"/>
    <property type="match status" value="1"/>
</dbReference>
<dbReference type="InterPro" id="IPR000073">
    <property type="entry name" value="AB_hydrolase_1"/>
</dbReference>
<dbReference type="InterPro" id="IPR029058">
    <property type="entry name" value="AB_hydrolase_fold"/>
</dbReference>
<dbReference type="InterPro" id="IPR008220">
    <property type="entry name" value="HAT_MetX-like"/>
</dbReference>
<dbReference type="NCBIfam" id="TIGR01392">
    <property type="entry name" value="homoserO_Ac_trn"/>
    <property type="match status" value="1"/>
</dbReference>
<dbReference type="NCBIfam" id="NF001209">
    <property type="entry name" value="PRK00175.1"/>
    <property type="match status" value="1"/>
</dbReference>
<dbReference type="PANTHER" id="PTHR32268">
    <property type="entry name" value="HOMOSERINE O-ACETYLTRANSFERASE"/>
    <property type="match status" value="1"/>
</dbReference>
<dbReference type="PANTHER" id="PTHR32268:SF11">
    <property type="entry name" value="HOMOSERINE O-ACETYLTRANSFERASE"/>
    <property type="match status" value="1"/>
</dbReference>
<dbReference type="Pfam" id="PF00561">
    <property type="entry name" value="Abhydrolase_1"/>
    <property type="match status" value="1"/>
</dbReference>
<dbReference type="PIRSF" id="PIRSF000443">
    <property type="entry name" value="Homoser_Ac_trans"/>
    <property type="match status" value="1"/>
</dbReference>
<dbReference type="SUPFAM" id="SSF53474">
    <property type="entry name" value="alpha/beta-Hydrolases"/>
    <property type="match status" value="1"/>
</dbReference>
<feature type="chain" id="PRO_1000021867" description="Homoserine O-succinyltransferase">
    <location>
        <begin position="1"/>
        <end position="381"/>
    </location>
</feature>
<feature type="domain" description="AB hydrolase-1" evidence="1">
    <location>
        <begin position="45"/>
        <end position="360"/>
    </location>
</feature>
<feature type="active site" description="Nucleophile" evidence="1">
    <location>
        <position position="151"/>
    </location>
</feature>
<feature type="active site" evidence="1">
    <location>
        <position position="321"/>
    </location>
</feature>
<feature type="active site" evidence="1">
    <location>
        <position position="354"/>
    </location>
</feature>
<feature type="binding site" evidence="1">
    <location>
        <position position="221"/>
    </location>
    <ligand>
        <name>substrate</name>
    </ligand>
</feature>
<feature type="binding site" evidence="1">
    <location>
        <position position="355"/>
    </location>
    <ligand>
        <name>substrate</name>
    </ligand>
</feature>
<feature type="site" description="Important for acyl-CoA specificity" evidence="1">
    <location>
        <position position="323"/>
    </location>
</feature>
<accession>Q1BSM1</accession>
<keyword id="KW-0012">Acyltransferase</keyword>
<keyword id="KW-0028">Amino-acid biosynthesis</keyword>
<keyword id="KW-0963">Cytoplasm</keyword>
<keyword id="KW-0486">Methionine biosynthesis</keyword>
<keyword id="KW-0808">Transferase</keyword>
<name>METXS_BURO1</name>
<reference key="1">
    <citation type="submission" date="2006-05" db="EMBL/GenBank/DDBJ databases">
        <title>Complete sequence of chromosome 1 of Burkholderia cenocepacia AU 1054.</title>
        <authorList>
            <consortium name="US DOE Joint Genome Institute"/>
            <person name="Copeland A."/>
            <person name="Lucas S."/>
            <person name="Lapidus A."/>
            <person name="Barry K."/>
            <person name="Detter J.C."/>
            <person name="Glavina del Rio T."/>
            <person name="Hammon N."/>
            <person name="Israni S."/>
            <person name="Dalin E."/>
            <person name="Tice H."/>
            <person name="Pitluck S."/>
            <person name="Chain P."/>
            <person name="Malfatti S."/>
            <person name="Shin M."/>
            <person name="Vergez L."/>
            <person name="Schmutz J."/>
            <person name="Larimer F."/>
            <person name="Land M."/>
            <person name="Hauser L."/>
            <person name="Kyrpides N."/>
            <person name="Lykidis A."/>
            <person name="LiPuma J.J."/>
            <person name="Konstantinidis K."/>
            <person name="Tiedje J.M."/>
            <person name="Richardson P."/>
        </authorList>
    </citation>
    <scope>NUCLEOTIDE SEQUENCE [LARGE SCALE GENOMIC DNA]</scope>
    <source>
        <strain>AU 1054</strain>
    </source>
</reference>
<organism>
    <name type="scientific">Burkholderia orbicola (strain AU 1054)</name>
    <dbReference type="NCBI Taxonomy" id="331271"/>
    <lineage>
        <taxon>Bacteria</taxon>
        <taxon>Pseudomonadati</taxon>
        <taxon>Pseudomonadota</taxon>
        <taxon>Betaproteobacteria</taxon>
        <taxon>Burkholderiales</taxon>
        <taxon>Burkholderiaceae</taxon>
        <taxon>Burkholderia</taxon>
        <taxon>Burkholderia cepacia complex</taxon>
        <taxon>Burkholderia orbicola</taxon>
    </lineage>
</organism>
<comment type="function">
    <text evidence="1">Transfers a succinyl group from succinyl-CoA to L-homoserine, forming succinyl-L-homoserine.</text>
</comment>
<comment type="catalytic activity">
    <reaction evidence="1">
        <text>L-homoserine + succinyl-CoA = O-succinyl-L-homoserine + CoA</text>
        <dbReference type="Rhea" id="RHEA:22008"/>
        <dbReference type="ChEBI" id="CHEBI:57287"/>
        <dbReference type="ChEBI" id="CHEBI:57292"/>
        <dbReference type="ChEBI" id="CHEBI:57476"/>
        <dbReference type="ChEBI" id="CHEBI:57661"/>
        <dbReference type="EC" id="2.3.1.46"/>
    </reaction>
</comment>
<comment type="pathway">
    <text evidence="1">Amino-acid biosynthesis; L-methionine biosynthesis via de novo pathway; O-succinyl-L-homoserine from L-homoserine: step 1/1.</text>
</comment>
<comment type="subunit">
    <text evidence="1">Homodimer.</text>
</comment>
<comment type="subcellular location">
    <subcellularLocation>
        <location evidence="1">Cytoplasm</location>
    </subcellularLocation>
</comment>
<comment type="similarity">
    <text evidence="1">Belongs to the AB hydrolase superfamily. MetX family.</text>
</comment>
<evidence type="ECO:0000255" key="1">
    <source>
        <dbReference type="HAMAP-Rule" id="MF_00296"/>
    </source>
</evidence>
<proteinExistence type="inferred from homology"/>
<protein>
    <recommendedName>
        <fullName evidence="1">Homoserine O-succinyltransferase</fullName>
        <shortName evidence="1">HST</shortName>
        <ecNumber evidence="1">2.3.1.46</ecNumber>
    </recommendedName>
    <alternativeName>
        <fullName evidence="1">Homoserine transsuccinylase</fullName>
        <shortName evidence="1">HTS</shortName>
    </alternativeName>
</protein>